<evidence type="ECO:0000255" key="1"/>
<evidence type="ECO:0000255" key="2">
    <source>
        <dbReference type="PROSITE-ProRule" id="PRU00192"/>
    </source>
</evidence>
<evidence type="ECO:0000256" key="3">
    <source>
        <dbReference type="SAM" id="MobiDB-lite"/>
    </source>
</evidence>
<evidence type="ECO:0000303" key="4">
    <source>
    </source>
</evidence>
<accession>Q7TSG5</accession>
<accession>B1AW04</accession>
<accession>Q3U2S3</accession>
<gene>
    <name type="primary">Sh3d21</name>
</gene>
<protein>
    <recommendedName>
        <fullName>SH3 domain-containing protein 21</fullName>
    </recommendedName>
</protein>
<dbReference type="EMBL" id="AK155132">
    <property type="protein sequence ID" value="BAE33067.1"/>
    <property type="molecule type" value="mRNA"/>
</dbReference>
<dbReference type="EMBL" id="AL731780">
    <property type="status" value="NOT_ANNOTATED_CDS"/>
    <property type="molecule type" value="Genomic_DNA"/>
</dbReference>
<dbReference type="EMBL" id="BC053421">
    <property type="protein sequence ID" value="AAH53421.1"/>
    <property type="molecule type" value="mRNA"/>
</dbReference>
<dbReference type="CCDS" id="CCDS18644.1">
    <molecule id="Q7TSG5-1"/>
</dbReference>
<dbReference type="CCDS" id="CCDS51301.1">
    <molecule id="Q7TSG5-2"/>
</dbReference>
<dbReference type="RefSeq" id="NP_080132.1">
    <molecule id="Q7TSG5-1"/>
    <property type="nucleotide sequence ID" value="NM_025856.3"/>
</dbReference>
<dbReference type="RefSeq" id="XP_006503358.1">
    <property type="nucleotide sequence ID" value="XM_006503295.2"/>
</dbReference>
<dbReference type="RefSeq" id="XP_030109571.1">
    <molecule id="Q7TSG5-1"/>
    <property type="nucleotide sequence ID" value="XM_030253711.2"/>
</dbReference>
<dbReference type="SMR" id="Q7TSG5"/>
<dbReference type="BioGRID" id="211823">
    <property type="interactions" value="2"/>
</dbReference>
<dbReference type="FunCoup" id="Q7TSG5">
    <property type="interactions" value="178"/>
</dbReference>
<dbReference type="IntAct" id="Q7TSG5">
    <property type="interactions" value="1"/>
</dbReference>
<dbReference type="MINT" id="Q7TSG5"/>
<dbReference type="STRING" id="10090.ENSMUSP00000095501"/>
<dbReference type="GlyGen" id="Q7TSG5">
    <property type="glycosylation" value="1 site, 1 N-linked glycan (1 site)"/>
</dbReference>
<dbReference type="iPTMnet" id="Q7TSG5"/>
<dbReference type="PhosphoSitePlus" id="Q7TSG5"/>
<dbReference type="SwissPalm" id="Q7TSG5"/>
<dbReference type="jPOST" id="Q7TSG5"/>
<dbReference type="PaxDb" id="10090-ENSMUSP00000095501"/>
<dbReference type="ProteomicsDB" id="261342">
    <molecule id="Q7TSG5-1"/>
</dbReference>
<dbReference type="ProteomicsDB" id="261343">
    <molecule id="Q7TSG5-2"/>
</dbReference>
<dbReference type="Antibodypedia" id="51050">
    <property type="antibodies" value="54 antibodies from 9 providers"/>
</dbReference>
<dbReference type="DNASU" id="66938"/>
<dbReference type="Ensembl" id="ENSMUST00000094760.9">
    <molecule id="Q7TSG5-1"/>
    <property type="protein sequence ID" value="ENSMUSP00000092352.3"/>
    <property type="gene ID" value="ENSMUSG00000073758.11"/>
</dbReference>
<dbReference type="GeneID" id="66938"/>
<dbReference type="KEGG" id="mmu:66938"/>
<dbReference type="UCSC" id="uc008usq.2">
    <molecule id="Q7TSG5-1"/>
    <property type="organism name" value="mouse"/>
</dbReference>
<dbReference type="AGR" id="MGI:1914188"/>
<dbReference type="CTD" id="79729"/>
<dbReference type="MGI" id="MGI:1914188">
    <property type="gene designation" value="Sh3d21"/>
</dbReference>
<dbReference type="VEuPathDB" id="HostDB:ENSMUSG00000073758"/>
<dbReference type="eggNOG" id="KOG4348">
    <property type="taxonomic scope" value="Eukaryota"/>
</dbReference>
<dbReference type="GeneTree" id="ENSGT00940000160627"/>
<dbReference type="InParanoid" id="Q7TSG5"/>
<dbReference type="OrthoDB" id="73680at2759"/>
<dbReference type="PhylomeDB" id="Q7TSG5"/>
<dbReference type="TreeFam" id="TF338545"/>
<dbReference type="BioGRID-ORCS" id="66938">
    <property type="hits" value="1 hit in 80 CRISPR screens"/>
</dbReference>
<dbReference type="ChiTaRS" id="Sh3d21">
    <property type="organism name" value="mouse"/>
</dbReference>
<dbReference type="PRO" id="PR:Q7TSG5"/>
<dbReference type="Proteomes" id="UP000000589">
    <property type="component" value="Chromosome 4"/>
</dbReference>
<dbReference type="RNAct" id="Q7TSG5">
    <property type="molecule type" value="protein"/>
</dbReference>
<dbReference type="Bgee" id="ENSMUSG00000073758">
    <property type="expression patterns" value="Expressed in seminiferous tubule of testis and 210 other cell types or tissues"/>
</dbReference>
<dbReference type="ExpressionAtlas" id="Q7TSG5">
    <property type="expression patterns" value="baseline and differential"/>
</dbReference>
<dbReference type="CDD" id="cd12142">
    <property type="entry name" value="SH3_D21-like"/>
    <property type="match status" value="1"/>
</dbReference>
<dbReference type="Gene3D" id="2.30.30.40">
    <property type="entry name" value="SH3 Domains"/>
    <property type="match status" value="1"/>
</dbReference>
<dbReference type="InterPro" id="IPR050384">
    <property type="entry name" value="Endophilin_SH3RF"/>
</dbReference>
<dbReference type="InterPro" id="IPR036028">
    <property type="entry name" value="SH3-like_dom_sf"/>
</dbReference>
<dbReference type="InterPro" id="IPR001452">
    <property type="entry name" value="SH3_domain"/>
</dbReference>
<dbReference type="InterPro" id="IPR035468">
    <property type="entry name" value="SH3D21_SH3"/>
</dbReference>
<dbReference type="PANTHER" id="PTHR14167">
    <property type="entry name" value="SH3 DOMAIN-CONTAINING"/>
    <property type="match status" value="1"/>
</dbReference>
<dbReference type="PANTHER" id="PTHR14167:SF28">
    <property type="entry name" value="SH3 DOMAIN-CONTAINING PROTEIN 21"/>
    <property type="match status" value="1"/>
</dbReference>
<dbReference type="Pfam" id="PF07653">
    <property type="entry name" value="SH3_2"/>
    <property type="match status" value="1"/>
</dbReference>
<dbReference type="PRINTS" id="PR00452">
    <property type="entry name" value="SH3DOMAIN"/>
</dbReference>
<dbReference type="SMART" id="SM00326">
    <property type="entry name" value="SH3"/>
    <property type="match status" value="1"/>
</dbReference>
<dbReference type="SUPFAM" id="SSF50044">
    <property type="entry name" value="SH3-domain"/>
    <property type="match status" value="1"/>
</dbReference>
<dbReference type="PROSITE" id="PS50002">
    <property type="entry name" value="SH3"/>
    <property type="match status" value="1"/>
</dbReference>
<organism>
    <name type="scientific">Mus musculus</name>
    <name type="common">Mouse</name>
    <dbReference type="NCBI Taxonomy" id="10090"/>
    <lineage>
        <taxon>Eukaryota</taxon>
        <taxon>Metazoa</taxon>
        <taxon>Chordata</taxon>
        <taxon>Craniata</taxon>
        <taxon>Vertebrata</taxon>
        <taxon>Euteleostomi</taxon>
        <taxon>Mammalia</taxon>
        <taxon>Eutheria</taxon>
        <taxon>Euarchontoglires</taxon>
        <taxon>Glires</taxon>
        <taxon>Rodentia</taxon>
        <taxon>Myomorpha</taxon>
        <taxon>Muroidea</taxon>
        <taxon>Muridae</taxon>
        <taxon>Murinae</taxon>
        <taxon>Mus</taxon>
        <taxon>Mus</taxon>
    </lineage>
</organism>
<reference key="1">
    <citation type="journal article" date="2005" name="Science">
        <title>The transcriptional landscape of the mammalian genome.</title>
        <authorList>
            <person name="Carninci P."/>
            <person name="Kasukawa T."/>
            <person name="Katayama S."/>
            <person name="Gough J."/>
            <person name="Frith M.C."/>
            <person name="Maeda N."/>
            <person name="Oyama R."/>
            <person name="Ravasi T."/>
            <person name="Lenhard B."/>
            <person name="Wells C."/>
            <person name="Kodzius R."/>
            <person name="Shimokawa K."/>
            <person name="Bajic V.B."/>
            <person name="Brenner S.E."/>
            <person name="Batalov S."/>
            <person name="Forrest A.R."/>
            <person name="Zavolan M."/>
            <person name="Davis M.J."/>
            <person name="Wilming L.G."/>
            <person name="Aidinis V."/>
            <person name="Allen J.E."/>
            <person name="Ambesi-Impiombato A."/>
            <person name="Apweiler R."/>
            <person name="Aturaliya R.N."/>
            <person name="Bailey T.L."/>
            <person name="Bansal M."/>
            <person name="Baxter L."/>
            <person name="Beisel K.W."/>
            <person name="Bersano T."/>
            <person name="Bono H."/>
            <person name="Chalk A.M."/>
            <person name="Chiu K.P."/>
            <person name="Choudhary V."/>
            <person name="Christoffels A."/>
            <person name="Clutterbuck D.R."/>
            <person name="Crowe M.L."/>
            <person name="Dalla E."/>
            <person name="Dalrymple B.P."/>
            <person name="de Bono B."/>
            <person name="Della Gatta G."/>
            <person name="di Bernardo D."/>
            <person name="Down T."/>
            <person name="Engstrom P."/>
            <person name="Fagiolini M."/>
            <person name="Faulkner G."/>
            <person name="Fletcher C.F."/>
            <person name="Fukushima T."/>
            <person name="Furuno M."/>
            <person name="Futaki S."/>
            <person name="Gariboldi M."/>
            <person name="Georgii-Hemming P."/>
            <person name="Gingeras T.R."/>
            <person name="Gojobori T."/>
            <person name="Green R.E."/>
            <person name="Gustincich S."/>
            <person name="Harbers M."/>
            <person name="Hayashi Y."/>
            <person name="Hensch T.K."/>
            <person name="Hirokawa N."/>
            <person name="Hill D."/>
            <person name="Huminiecki L."/>
            <person name="Iacono M."/>
            <person name="Ikeo K."/>
            <person name="Iwama A."/>
            <person name="Ishikawa T."/>
            <person name="Jakt M."/>
            <person name="Kanapin A."/>
            <person name="Katoh M."/>
            <person name="Kawasawa Y."/>
            <person name="Kelso J."/>
            <person name="Kitamura H."/>
            <person name="Kitano H."/>
            <person name="Kollias G."/>
            <person name="Krishnan S.P."/>
            <person name="Kruger A."/>
            <person name="Kummerfeld S.K."/>
            <person name="Kurochkin I.V."/>
            <person name="Lareau L.F."/>
            <person name="Lazarevic D."/>
            <person name="Lipovich L."/>
            <person name="Liu J."/>
            <person name="Liuni S."/>
            <person name="McWilliam S."/>
            <person name="Madan Babu M."/>
            <person name="Madera M."/>
            <person name="Marchionni L."/>
            <person name="Matsuda H."/>
            <person name="Matsuzawa S."/>
            <person name="Miki H."/>
            <person name="Mignone F."/>
            <person name="Miyake S."/>
            <person name="Morris K."/>
            <person name="Mottagui-Tabar S."/>
            <person name="Mulder N."/>
            <person name="Nakano N."/>
            <person name="Nakauchi H."/>
            <person name="Ng P."/>
            <person name="Nilsson R."/>
            <person name="Nishiguchi S."/>
            <person name="Nishikawa S."/>
            <person name="Nori F."/>
            <person name="Ohara O."/>
            <person name="Okazaki Y."/>
            <person name="Orlando V."/>
            <person name="Pang K.C."/>
            <person name="Pavan W.J."/>
            <person name="Pavesi G."/>
            <person name="Pesole G."/>
            <person name="Petrovsky N."/>
            <person name="Piazza S."/>
            <person name="Reed J."/>
            <person name="Reid J.F."/>
            <person name="Ring B.Z."/>
            <person name="Ringwald M."/>
            <person name="Rost B."/>
            <person name="Ruan Y."/>
            <person name="Salzberg S.L."/>
            <person name="Sandelin A."/>
            <person name="Schneider C."/>
            <person name="Schoenbach C."/>
            <person name="Sekiguchi K."/>
            <person name="Semple C.A."/>
            <person name="Seno S."/>
            <person name="Sessa L."/>
            <person name="Sheng Y."/>
            <person name="Shibata Y."/>
            <person name="Shimada H."/>
            <person name="Shimada K."/>
            <person name="Silva D."/>
            <person name="Sinclair B."/>
            <person name="Sperling S."/>
            <person name="Stupka E."/>
            <person name="Sugiura K."/>
            <person name="Sultana R."/>
            <person name="Takenaka Y."/>
            <person name="Taki K."/>
            <person name="Tammoja K."/>
            <person name="Tan S.L."/>
            <person name="Tang S."/>
            <person name="Taylor M.S."/>
            <person name="Tegner J."/>
            <person name="Teichmann S.A."/>
            <person name="Ueda H.R."/>
            <person name="van Nimwegen E."/>
            <person name="Verardo R."/>
            <person name="Wei C.L."/>
            <person name="Yagi K."/>
            <person name="Yamanishi H."/>
            <person name="Zabarovsky E."/>
            <person name="Zhu S."/>
            <person name="Zimmer A."/>
            <person name="Hide W."/>
            <person name="Bult C."/>
            <person name="Grimmond S.M."/>
            <person name="Teasdale R.D."/>
            <person name="Liu E.T."/>
            <person name="Brusic V."/>
            <person name="Quackenbush J."/>
            <person name="Wahlestedt C."/>
            <person name="Mattick J.S."/>
            <person name="Hume D.A."/>
            <person name="Kai C."/>
            <person name="Sasaki D."/>
            <person name="Tomaru Y."/>
            <person name="Fukuda S."/>
            <person name="Kanamori-Katayama M."/>
            <person name="Suzuki M."/>
            <person name="Aoki J."/>
            <person name="Arakawa T."/>
            <person name="Iida J."/>
            <person name="Imamura K."/>
            <person name="Itoh M."/>
            <person name="Kato T."/>
            <person name="Kawaji H."/>
            <person name="Kawagashira N."/>
            <person name="Kawashima T."/>
            <person name="Kojima M."/>
            <person name="Kondo S."/>
            <person name="Konno H."/>
            <person name="Nakano K."/>
            <person name="Ninomiya N."/>
            <person name="Nishio T."/>
            <person name="Okada M."/>
            <person name="Plessy C."/>
            <person name="Shibata K."/>
            <person name="Shiraki T."/>
            <person name="Suzuki S."/>
            <person name="Tagami M."/>
            <person name="Waki K."/>
            <person name="Watahiki A."/>
            <person name="Okamura-Oho Y."/>
            <person name="Suzuki H."/>
            <person name="Kawai J."/>
            <person name="Hayashizaki Y."/>
        </authorList>
    </citation>
    <scope>NUCLEOTIDE SEQUENCE [LARGE SCALE MRNA] (ISOFORM 2)</scope>
    <source>
        <strain>NOD</strain>
    </source>
</reference>
<reference key="2">
    <citation type="journal article" date="2009" name="PLoS Biol.">
        <title>Lineage-specific biology revealed by a finished genome assembly of the mouse.</title>
        <authorList>
            <person name="Church D.M."/>
            <person name="Goodstadt L."/>
            <person name="Hillier L.W."/>
            <person name="Zody M.C."/>
            <person name="Goldstein S."/>
            <person name="She X."/>
            <person name="Bult C.J."/>
            <person name="Agarwala R."/>
            <person name="Cherry J.L."/>
            <person name="DiCuccio M."/>
            <person name="Hlavina W."/>
            <person name="Kapustin Y."/>
            <person name="Meric P."/>
            <person name="Maglott D."/>
            <person name="Birtle Z."/>
            <person name="Marques A.C."/>
            <person name="Graves T."/>
            <person name="Zhou S."/>
            <person name="Teague B."/>
            <person name="Potamousis K."/>
            <person name="Churas C."/>
            <person name="Place M."/>
            <person name="Herschleb J."/>
            <person name="Runnheim R."/>
            <person name="Forrest D."/>
            <person name="Amos-Landgraf J."/>
            <person name="Schwartz D.C."/>
            <person name="Cheng Z."/>
            <person name="Lindblad-Toh K."/>
            <person name="Eichler E.E."/>
            <person name="Ponting C.P."/>
        </authorList>
    </citation>
    <scope>NUCLEOTIDE SEQUENCE [LARGE SCALE GENOMIC DNA]</scope>
    <source>
        <strain>C57BL/6J</strain>
    </source>
</reference>
<reference key="3">
    <citation type="journal article" date="2004" name="Genome Res.">
        <title>The status, quality, and expansion of the NIH full-length cDNA project: the Mammalian Gene Collection (MGC).</title>
        <authorList>
            <consortium name="The MGC Project Team"/>
        </authorList>
    </citation>
    <scope>NUCLEOTIDE SEQUENCE [LARGE SCALE MRNA] (ISOFORM 1)</scope>
    <source>
        <tissue>Testis</tissue>
    </source>
</reference>
<reference key="4">
    <citation type="journal article" date="2010" name="Cell">
        <title>A tissue-specific atlas of mouse protein phosphorylation and expression.</title>
        <authorList>
            <person name="Huttlin E.L."/>
            <person name="Jedrychowski M.P."/>
            <person name="Elias J.E."/>
            <person name="Goswami T."/>
            <person name="Rad R."/>
            <person name="Beausoleil S.A."/>
            <person name="Villen J."/>
            <person name="Haas W."/>
            <person name="Sowa M.E."/>
            <person name="Gygi S.P."/>
        </authorList>
    </citation>
    <scope>IDENTIFICATION BY MASS SPECTROMETRY [LARGE SCALE ANALYSIS]</scope>
    <source>
        <tissue>Testis</tissue>
    </source>
</reference>
<proteinExistence type="evidence at protein level"/>
<sequence length="549" mass="60324">MVQSELQLQPRAGRRADASNWGDFGSDKGGLGNTDIPPITPNSQRPPKLSNLTYDSPPDYLRTVSCPETCRVLFDYQPEAPDELALQKGDLVKVLRKTTEDKGWWEGECQGRRGVFPDNFVIPPPPIRKLIPRKIISRESAPIKETKKLMPKSSLPTVKKLAAAASAPGRAKTLSTPSGDSQKRPSRNSGFNGSCLNGGPRQPGRKGSRTQASQQHSASSQEDEQKSPGKGPSRSKTPTPEKTRLPDKVLAPETIPAPDKVSIPKDPVPKKAPDSDKIPATEDTTLDKAGTPESTLSGNKPAKDEALDLKMALHEDTAPALVKILTPEHMIFKKEPSRDNDQCQHLPQGGSTQRPESPAPSNNIQVPGEYSPPPDSSERSCCRVRQVNGSFPAQSKAEDVSAMEEANFLEEPLAKDERTLNKALPKKLPSERAGPQKQVLPQESAPTPQVPHTIQQMPVPEEAPTLHPLTPLTSPKSKNDRMDVLESLKEEVGLLRSRLELLELKLEQKMGDVWEELKTETLLSPEVQMMQRNRKSFKHAETQTETQTE</sequence>
<name>SH321_MOUSE</name>
<keyword id="KW-0025">Alternative splicing</keyword>
<keyword id="KW-0175">Coiled coil</keyword>
<keyword id="KW-1185">Reference proteome</keyword>
<keyword id="KW-0728">SH3 domain</keyword>
<feature type="chain" id="PRO_0000337131" description="SH3 domain-containing protein 21">
    <location>
        <begin position="1"/>
        <end position="549"/>
    </location>
</feature>
<feature type="domain" description="SH3" evidence="2">
    <location>
        <begin position="65"/>
        <end position="126"/>
    </location>
</feature>
<feature type="region of interest" description="Disordered" evidence="3">
    <location>
        <begin position="1"/>
        <end position="56"/>
    </location>
</feature>
<feature type="region of interest" description="Disordered" evidence="3">
    <location>
        <begin position="142"/>
        <end position="303"/>
    </location>
</feature>
<feature type="region of interest" description="Disordered" evidence="3">
    <location>
        <begin position="332"/>
        <end position="479"/>
    </location>
</feature>
<feature type="region of interest" description="Disordered" evidence="3">
    <location>
        <begin position="528"/>
        <end position="549"/>
    </location>
</feature>
<feature type="coiled-coil region" evidence="1">
    <location>
        <begin position="482"/>
        <end position="510"/>
    </location>
</feature>
<feature type="compositionally biased region" description="Polar residues" evidence="3">
    <location>
        <begin position="41"/>
        <end position="54"/>
    </location>
</feature>
<feature type="compositionally biased region" description="Low complexity" evidence="3">
    <location>
        <begin position="211"/>
        <end position="220"/>
    </location>
</feature>
<feature type="compositionally biased region" description="Basic and acidic residues" evidence="3">
    <location>
        <begin position="267"/>
        <end position="280"/>
    </location>
</feature>
<feature type="compositionally biased region" description="Basic and acidic residues" evidence="3">
    <location>
        <begin position="332"/>
        <end position="342"/>
    </location>
</feature>
<feature type="compositionally biased region" description="Polar residues" evidence="3">
    <location>
        <begin position="343"/>
        <end position="365"/>
    </location>
</feature>
<feature type="compositionally biased region" description="Polar residues" evidence="3">
    <location>
        <begin position="439"/>
        <end position="456"/>
    </location>
</feature>
<feature type="splice variant" id="VSP_033936" description="In isoform 2." evidence="4">
    <original>MVQSELQLQPRAGRRADASNWGDFGSDKGG</original>
    <variation>MEVLVLARYRAQTEDELSLAPGDVIRQVCAGPARGWLLGELRGRRGRFPKRLVREIPEALRGVTESRPRFPRRSRRHPINSRDPQRWCRVNFNYSPEQADELTLQTGEILEVIKEIEDGWWLGEKNGQLGAFPSNFVELLDSGPPS</variation>
    <location>
        <begin position="1"/>
        <end position="30"/>
    </location>
</feature>
<comment type="alternative products">
    <event type="alternative splicing"/>
    <isoform>
        <id>Q7TSG5-1</id>
        <name>1</name>
        <sequence type="displayed"/>
    </isoform>
    <isoform>
        <id>Q7TSG5-2</id>
        <name>2</name>
        <sequence type="described" ref="VSP_033936"/>
    </isoform>
</comment>